<proteinExistence type="inferred from homology"/>
<accession>C3NG93</accession>
<name>RL10_SACI1</name>
<gene>
    <name evidence="1" type="primary">rpl10</name>
    <name evidence="1" type="synonym">rplP0</name>
    <name type="ordered locus">YN1551_1046</name>
</gene>
<dbReference type="EMBL" id="CP001404">
    <property type="protein sequence ID" value="ACP48153.1"/>
    <property type="molecule type" value="Genomic_DNA"/>
</dbReference>
<dbReference type="RefSeq" id="WP_012713970.1">
    <property type="nucleotide sequence ID" value="NC_012623.1"/>
</dbReference>
<dbReference type="SMR" id="C3NG93"/>
<dbReference type="GeneID" id="7809659"/>
<dbReference type="KEGG" id="sin:YN1551_1046"/>
<dbReference type="HOGENOM" id="CLU_053173_0_0_2"/>
<dbReference type="Proteomes" id="UP000006818">
    <property type="component" value="Chromosome"/>
</dbReference>
<dbReference type="GO" id="GO:0022625">
    <property type="term" value="C:cytosolic large ribosomal subunit"/>
    <property type="evidence" value="ECO:0007669"/>
    <property type="project" value="TreeGrafter"/>
</dbReference>
<dbReference type="GO" id="GO:0070180">
    <property type="term" value="F:large ribosomal subunit rRNA binding"/>
    <property type="evidence" value="ECO:0007669"/>
    <property type="project" value="UniProtKB-UniRule"/>
</dbReference>
<dbReference type="GO" id="GO:0003735">
    <property type="term" value="F:structural constituent of ribosome"/>
    <property type="evidence" value="ECO:0007669"/>
    <property type="project" value="TreeGrafter"/>
</dbReference>
<dbReference type="GO" id="GO:0002181">
    <property type="term" value="P:cytoplasmic translation"/>
    <property type="evidence" value="ECO:0007669"/>
    <property type="project" value="TreeGrafter"/>
</dbReference>
<dbReference type="GO" id="GO:0000027">
    <property type="term" value="P:ribosomal large subunit assembly"/>
    <property type="evidence" value="ECO:0007669"/>
    <property type="project" value="TreeGrafter"/>
</dbReference>
<dbReference type="CDD" id="cd05795">
    <property type="entry name" value="Ribosomal_P0_L10e"/>
    <property type="match status" value="1"/>
</dbReference>
<dbReference type="FunFam" id="3.90.105.20:FF:000001">
    <property type="entry name" value="60S acidic ribosomal protein P0"/>
    <property type="match status" value="1"/>
</dbReference>
<dbReference type="Gene3D" id="3.30.70.1730">
    <property type="match status" value="1"/>
</dbReference>
<dbReference type="Gene3D" id="3.90.105.20">
    <property type="match status" value="1"/>
</dbReference>
<dbReference type="Gene3D" id="6.10.140.760">
    <property type="match status" value="1"/>
</dbReference>
<dbReference type="HAMAP" id="MF_00280">
    <property type="entry name" value="Ribosomal_uL10_arch"/>
    <property type="match status" value="1"/>
</dbReference>
<dbReference type="InterPro" id="IPR050323">
    <property type="entry name" value="Ribosomal_protein_uL10"/>
</dbReference>
<dbReference type="InterPro" id="IPR001790">
    <property type="entry name" value="Ribosomal_uL10"/>
</dbReference>
<dbReference type="InterPro" id="IPR040637">
    <property type="entry name" value="Ribosomal_uL10-like_insert"/>
</dbReference>
<dbReference type="InterPro" id="IPR043164">
    <property type="entry name" value="Ribosomal_uL10-like_insert_sf"/>
</dbReference>
<dbReference type="InterPro" id="IPR043141">
    <property type="entry name" value="Ribosomal_uL10-like_sf"/>
</dbReference>
<dbReference type="InterPro" id="IPR022909">
    <property type="entry name" value="Ribosomal_uL10_arc"/>
</dbReference>
<dbReference type="NCBIfam" id="NF003095">
    <property type="entry name" value="PRK04019.1-1"/>
    <property type="match status" value="1"/>
</dbReference>
<dbReference type="PANTHER" id="PTHR45699">
    <property type="entry name" value="60S ACIDIC RIBOSOMAL PROTEIN P0"/>
    <property type="match status" value="1"/>
</dbReference>
<dbReference type="PANTHER" id="PTHR45699:SF3">
    <property type="entry name" value="LARGE RIBOSOMAL SUBUNIT PROTEIN UL10"/>
    <property type="match status" value="1"/>
</dbReference>
<dbReference type="Pfam" id="PF00466">
    <property type="entry name" value="Ribosomal_L10"/>
    <property type="match status" value="1"/>
</dbReference>
<dbReference type="Pfam" id="PF17777">
    <property type="entry name" value="RL10P_insert"/>
    <property type="match status" value="1"/>
</dbReference>
<dbReference type="SUPFAM" id="SSF160369">
    <property type="entry name" value="Ribosomal protein L10-like"/>
    <property type="match status" value="1"/>
</dbReference>
<comment type="function">
    <text evidence="1">Forms part of the ribosomal stalk, playing a central role in the interaction of the ribosome with GTP-bound translation factors.</text>
</comment>
<comment type="subunit">
    <text evidence="1">Part of the 50S ribosomal subunit. Forms part of the ribosomal stalk which helps the ribosome interact with GTP-bound translation factors. Forms a heptameric L10(L12)2(L12)2(L12)2 complex, where L10 forms an elongated spine to which the L12 dimers bind in a sequential fashion.</text>
</comment>
<comment type="similarity">
    <text evidence="1">Belongs to the universal ribosomal protein uL10 family.</text>
</comment>
<sequence length="338" mass="37109">MKRLALALKQKKVASWKLEEVKELTELIKNSNTILIGSLEGFPADKLHEIRKKLRGKAIIKVTKNTLFKIAAKNAGISTEKLEQYLTGPNVFIFTKDNPFLTNMFFENYKLRRYAMPGDKAEEEVIIPAGDTGMPAGPILSVFGKLKVQTKVQDGKVHVVKDTVVAKPGDVIPTEALPILQKLGIMPVYVKLKIKVAYHEGLVIPAENLKLNLEGYRSNIAEAYRNAFTLAVEIAYPVPDVLKFTINKIFKNAITLASEIGYLTPESAQAVISKAVAKAYALATAISGKVDLGVKLPSAQQTQTQQSTAEEKKEEKKEEEKKGPSEEEIGSGLASLFG</sequence>
<reference key="1">
    <citation type="journal article" date="2009" name="Proc. Natl. Acad. Sci. U.S.A.">
        <title>Biogeography of the Sulfolobus islandicus pan-genome.</title>
        <authorList>
            <person name="Reno M.L."/>
            <person name="Held N.L."/>
            <person name="Fields C.J."/>
            <person name="Burke P.V."/>
            <person name="Whitaker R.J."/>
        </authorList>
    </citation>
    <scope>NUCLEOTIDE SEQUENCE [LARGE SCALE GENOMIC DNA]</scope>
    <source>
        <strain>Y.N.15.51 / Yellowstone #2</strain>
    </source>
</reference>
<feature type="chain" id="PRO_1000204816" description="Large ribosomal subunit protein uL10">
    <location>
        <begin position="1"/>
        <end position="338"/>
    </location>
</feature>
<feature type="region of interest" description="Disordered" evidence="2">
    <location>
        <begin position="297"/>
        <end position="338"/>
    </location>
</feature>
<feature type="compositionally biased region" description="Low complexity" evidence="2">
    <location>
        <begin position="298"/>
        <end position="308"/>
    </location>
</feature>
<feature type="compositionally biased region" description="Basic and acidic residues" evidence="2">
    <location>
        <begin position="309"/>
        <end position="325"/>
    </location>
</feature>
<protein>
    <recommendedName>
        <fullName evidence="1">Large ribosomal subunit protein uL10</fullName>
    </recommendedName>
    <alternativeName>
        <fullName evidence="3">50S ribosomal protein L10</fullName>
    </alternativeName>
    <alternativeName>
        <fullName evidence="1">Acidic ribosomal protein P0 homolog</fullName>
    </alternativeName>
</protein>
<keyword id="KW-0687">Ribonucleoprotein</keyword>
<keyword id="KW-0689">Ribosomal protein</keyword>
<keyword id="KW-0694">RNA-binding</keyword>
<keyword id="KW-0699">rRNA-binding</keyword>
<organism>
    <name type="scientific">Saccharolobus islandicus (strain Y.N.15.51 / Yellowstone #2)</name>
    <name type="common">Sulfolobus islandicus</name>
    <dbReference type="NCBI Taxonomy" id="419942"/>
    <lineage>
        <taxon>Archaea</taxon>
        <taxon>Thermoproteota</taxon>
        <taxon>Thermoprotei</taxon>
        <taxon>Sulfolobales</taxon>
        <taxon>Sulfolobaceae</taxon>
        <taxon>Saccharolobus</taxon>
    </lineage>
</organism>
<evidence type="ECO:0000255" key="1">
    <source>
        <dbReference type="HAMAP-Rule" id="MF_00280"/>
    </source>
</evidence>
<evidence type="ECO:0000256" key="2">
    <source>
        <dbReference type="SAM" id="MobiDB-lite"/>
    </source>
</evidence>
<evidence type="ECO:0000305" key="3"/>